<organism>
    <name type="scientific">Exiguobacterium sibiricum (strain DSM 17290 / CCUG 55495 / CIP 109462 / JCM 13490 / 255-15)</name>
    <dbReference type="NCBI Taxonomy" id="262543"/>
    <lineage>
        <taxon>Bacteria</taxon>
        <taxon>Bacillati</taxon>
        <taxon>Bacillota</taxon>
        <taxon>Bacilli</taxon>
        <taxon>Bacillales</taxon>
        <taxon>Bacillales Family XII. Incertae Sedis</taxon>
        <taxon>Exiguobacterium</taxon>
    </lineage>
</organism>
<name>UPP_EXIS2</name>
<keyword id="KW-0021">Allosteric enzyme</keyword>
<keyword id="KW-0328">Glycosyltransferase</keyword>
<keyword id="KW-0342">GTP-binding</keyword>
<keyword id="KW-0460">Magnesium</keyword>
<keyword id="KW-0547">Nucleotide-binding</keyword>
<keyword id="KW-1185">Reference proteome</keyword>
<keyword id="KW-0808">Transferase</keyword>
<gene>
    <name evidence="1" type="primary">upp</name>
    <name type="ordered locus">Exig_2687</name>
</gene>
<reference key="1">
    <citation type="submission" date="2008-04" db="EMBL/GenBank/DDBJ databases">
        <title>Complete sequence of chromosome of Exiguobacterium sibiricum 255-15.</title>
        <authorList>
            <consortium name="US DOE Joint Genome Institute"/>
            <person name="Copeland A."/>
            <person name="Lucas S."/>
            <person name="Lapidus A."/>
            <person name="Glavina del Rio T."/>
            <person name="Dalin E."/>
            <person name="Tice H."/>
            <person name="Bruce D."/>
            <person name="Goodwin L."/>
            <person name="Pitluck S."/>
            <person name="Kiss H."/>
            <person name="Chertkov O."/>
            <person name="Monk C."/>
            <person name="Brettin T."/>
            <person name="Detter J.C."/>
            <person name="Han C."/>
            <person name="Kuske C.R."/>
            <person name="Schmutz J."/>
            <person name="Larimer F."/>
            <person name="Land M."/>
            <person name="Hauser L."/>
            <person name="Kyrpides N."/>
            <person name="Mikhailova N."/>
            <person name="Vishnivetskaya T."/>
            <person name="Rodrigues D.F."/>
            <person name="Gilichinsky D."/>
            <person name="Tiedje J."/>
            <person name="Richardson P."/>
        </authorList>
    </citation>
    <scope>NUCLEOTIDE SEQUENCE [LARGE SCALE GENOMIC DNA]</scope>
    <source>
        <strain>DSM 17290 / CCUG 55495 / CIP 109462 / JCM 13490 / 255-15</strain>
    </source>
</reference>
<dbReference type="EC" id="2.4.2.9" evidence="1"/>
<dbReference type="EMBL" id="CP001022">
    <property type="protein sequence ID" value="ACB62135.1"/>
    <property type="molecule type" value="Genomic_DNA"/>
</dbReference>
<dbReference type="RefSeq" id="WP_012371551.1">
    <property type="nucleotide sequence ID" value="NC_010556.1"/>
</dbReference>
<dbReference type="SMR" id="B1YEG7"/>
<dbReference type="STRING" id="262543.Exig_2687"/>
<dbReference type="KEGG" id="esi:Exig_2687"/>
<dbReference type="eggNOG" id="COG0035">
    <property type="taxonomic scope" value="Bacteria"/>
</dbReference>
<dbReference type="HOGENOM" id="CLU_067096_2_2_9"/>
<dbReference type="OrthoDB" id="9781675at2"/>
<dbReference type="UniPathway" id="UPA00574">
    <property type="reaction ID" value="UER00636"/>
</dbReference>
<dbReference type="Proteomes" id="UP000001681">
    <property type="component" value="Chromosome"/>
</dbReference>
<dbReference type="GO" id="GO:0005525">
    <property type="term" value="F:GTP binding"/>
    <property type="evidence" value="ECO:0007669"/>
    <property type="project" value="UniProtKB-KW"/>
</dbReference>
<dbReference type="GO" id="GO:0000287">
    <property type="term" value="F:magnesium ion binding"/>
    <property type="evidence" value="ECO:0007669"/>
    <property type="project" value="UniProtKB-UniRule"/>
</dbReference>
<dbReference type="GO" id="GO:0004845">
    <property type="term" value="F:uracil phosphoribosyltransferase activity"/>
    <property type="evidence" value="ECO:0007669"/>
    <property type="project" value="UniProtKB-UniRule"/>
</dbReference>
<dbReference type="GO" id="GO:0044206">
    <property type="term" value="P:UMP salvage"/>
    <property type="evidence" value="ECO:0007669"/>
    <property type="project" value="UniProtKB-UniRule"/>
</dbReference>
<dbReference type="GO" id="GO:0006223">
    <property type="term" value="P:uracil salvage"/>
    <property type="evidence" value="ECO:0007669"/>
    <property type="project" value="InterPro"/>
</dbReference>
<dbReference type="CDD" id="cd06223">
    <property type="entry name" value="PRTases_typeI"/>
    <property type="match status" value="1"/>
</dbReference>
<dbReference type="FunFam" id="3.40.50.2020:FF:000003">
    <property type="entry name" value="Uracil phosphoribosyltransferase"/>
    <property type="match status" value="1"/>
</dbReference>
<dbReference type="Gene3D" id="3.40.50.2020">
    <property type="match status" value="1"/>
</dbReference>
<dbReference type="HAMAP" id="MF_01218_B">
    <property type="entry name" value="Upp_B"/>
    <property type="match status" value="1"/>
</dbReference>
<dbReference type="InterPro" id="IPR000836">
    <property type="entry name" value="PRibTrfase_dom"/>
</dbReference>
<dbReference type="InterPro" id="IPR029057">
    <property type="entry name" value="PRTase-like"/>
</dbReference>
<dbReference type="InterPro" id="IPR034332">
    <property type="entry name" value="Upp_B"/>
</dbReference>
<dbReference type="InterPro" id="IPR050054">
    <property type="entry name" value="UPRTase/APRTase"/>
</dbReference>
<dbReference type="InterPro" id="IPR005765">
    <property type="entry name" value="Ura_phspho_trans"/>
</dbReference>
<dbReference type="NCBIfam" id="NF001097">
    <property type="entry name" value="PRK00129.1"/>
    <property type="match status" value="1"/>
</dbReference>
<dbReference type="NCBIfam" id="TIGR01091">
    <property type="entry name" value="upp"/>
    <property type="match status" value="1"/>
</dbReference>
<dbReference type="PANTHER" id="PTHR32315">
    <property type="entry name" value="ADENINE PHOSPHORIBOSYLTRANSFERASE"/>
    <property type="match status" value="1"/>
</dbReference>
<dbReference type="PANTHER" id="PTHR32315:SF4">
    <property type="entry name" value="URACIL PHOSPHORIBOSYLTRANSFERASE, CHLOROPLASTIC"/>
    <property type="match status" value="1"/>
</dbReference>
<dbReference type="Pfam" id="PF14681">
    <property type="entry name" value="UPRTase"/>
    <property type="match status" value="1"/>
</dbReference>
<dbReference type="SUPFAM" id="SSF53271">
    <property type="entry name" value="PRTase-like"/>
    <property type="match status" value="1"/>
</dbReference>
<feature type="chain" id="PRO_1000139126" description="Uracil phosphoribosyltransferase">
    <location>
        <begin position="1"/>
        <end position="209"/>
    </location>
</feature>
<feature type="binding site" evidence="1">
    <location>
        <position position="79"/>
    </location>
    <ligand>
        <name>5-phospho-alpha-D-ribose 1-diphosphate</name>
        <dbReference type="ChEBI" id="CHEBI:58017"/>
    </ligand>
</feature>
<feature type="binding site" evidence="1">
    <location>
        <position position="104"/>
    </location>
    <ligand>
        <name>5-phospho-alpha-D-ribose 1-diphosphate</name>
        <dbReference type="ChEBI" id="CHEBI:58017"/>
    </ligand>
</feature>
<feature type="binding site" evidence="1">
    <location>
        <begin position="131"/>
        <end position="139"/>
    </location>
    <ligand>
        <name>5-phospho-alpha-D-ribose 1-diphosphate</name>
        <dbReference type="ChEBI" id="CHEBI:58017"/>
    </ligand>
</feature>
<feature type="binding site" evidence="1">
    <location>
        <position position="194"/>
    </location>
    <ligand>
        <name>uracil</name>
        <dbReference type="ChEBI" id="CHEBI:17568"/>
    </ligand>
</feature>
<feature type="binding site" evidence="1">
    <location>
        <begin position="199"/>
        <end position="201"/>
    </location>
    <ligand>
        <name>uracil</name>
        <dbReference type="ChEBI" id="CHEBI:17568"/>
    </ligand>
</feature>
<feature type="binding site" evidence="1">
    <location>
        <position position="200"/>
    </location>
    <ligand>
        <name>5-phospho-alpha-D-ribose 1-diphosphate</name>
        <dbReference type="ChEBI" id="CHEBI:58017"/>
    </ligand>
</feature>
<comment type="function">
    <text evidence="1">Catalyzes the conversion of uracil and 5-phospho-alpha-D-ribose 1-diphosphate (PRPP) to UMP and diphosphate.</text>
</comment>
<comment type="catalytic activity">
    <reaction evidence="1">
        <text>UMP + diphosphate = 5-phospho-alpha-D-ribose 1-diphosphate + uracil</text>
        <dbReference type="Rhea" id="RHEA:13017"/>
        <dbReference type="ChEBI" id="CHEBI:17568"/>
        <dbReference type="ChEBI" id="CHEBI:33019"/>
        <dbReference type="ChEBI" id="CHEBI:57865"/>
        <dbReference type="ChEBI" id="CHEBI:58017"/>
        <dbReference type="EC" id="2.4.2.9"/>
    </reaction>
</comment>
<comment type="cofactor">
    <cofactor evidence="1">
        <name>Mg(2+)</name>
        <dbReference type="ChEBI" id="CHEBI:18420"/>
    </cofactor>
    <text evidence="1">Binds 1 Mg(2+) ion per subunit. The magnesium is bound as Mg-PRPP.</text>
</comment>
<comment type="activity regulation">
    <text evidence="1">Allosterically activated by GTP.</text>
</comment>
<comment type="pathway">
    <text evidence="1">Pyrimidine metabolism; UMP biosynthesis via salvage pathway; UMP from uracil: step 1/1.</text>
</comment>
<comment type="similarity">
    <text evidence="1">Belongs to the UPRTase family.</text>
</comment>
<sequence>MSKVHVFDHPLIQHKMTIMRKVETGTKQFRELVDEVASLMAYELTRDLPLTDVEIETPVTKTTQKMIEGKKLGIVPILRAGLGMVDGMLRMMPNVKVGHIGLYRDPETLEPTEYYLKLPTDVAERDFVVVDPMLATGGSAADAISSLKKQGAQSIKLACLCAAPEGVKRIQEEHPDVDIYLAALDEKLNDHGYIVPGLGDAGDRLFGTK</sequence>
<accession>B1YEG7</accession>
<proteinExistence type="inferred from homology"/>
<evidence type="ECO:0000255" key="1">
    <source>
        <dbReference type="HAMAP-Rule" id="MF_01218"/>
    </source>
</evidence>
<protein>
    <recommendedName>
        <fullName evidence="1">Uracil phosphoribosyltransferase</fullName>
        <ecNumber evidence="1">2.4.2.9</ecNumber>
    </recommendedName>
    <alternativeName>
        <fullName evidence="1">UMP pyrophosphorylase</fullName>
    </alternativeName>
    <alternativeName>
        <fullName evidence="1">UPRTase</fullName>
    </alternativeName>
</protein>